<comment type="function">
    <text evidence="1">The GINS complex plays an essential role in the initiation of DNA replication. Has a role in chromosome segregation and is required for bir1 localization.</text>
</comment>
<comment type="subunit">
    <text evidence="1">Component of the GINS complex which is a heterotetramer of sld5, psf1, psf2 and psf3. Interacts with sld5.</text>
</comment>
<comment type="subcellular location">
    <subcellularLocation>
        <location evidence="1 2">Nucleus</location>
    </subcellularLocation>
</comment>
<comment type="similarity">
    <text evidence="3">Belongs to the GINS2/PSF2 family.</text>
</comment>
<dbReference type="EMBL" id="CU329671">
    <property type="protein sequence ID" value="CAA22185.1"/>
    <property type="molecule type" value="Genomic_DNA"/>
</dbReference>
<dbReference type="PIR" id="T40665">
    <property type="entry name" value="T40665"/>
</dbReference>
<dbReference type="RefSeq" id="NP_595493.1">
    <property type="nucleotide sequence ID" value="NM_001021404.2"/>
</dbReference>
<dbReference type="SMR" id="O94329"/>
<dbReference type="BioGRID" id="277708">
    <property type="interactions" value="16"/>
</dbReference>
<dbReference type="FunCoup" id="O94329">
    <property type="interactions" value="446"/>
</dbReference>
<dbReference type="IntAct" id="O94329">
    <property type="interactions" value="5"/>
</dbReference>
<dbReference type="MINT" id="O94329"/>
<dbReference type="STRING" id="284812.O94329"/>
<dbReference type="PaxDb" id="4896-SPBC725.13c.1"/>
<dbReference type="EnsemblFungi" id="SPBC725.13c.1">
    <property type="protein sequence ID" value="SPBC725.13c.1:pep"/>
    <property type="gene ID" value="SPBC725.13c"/>
</dbReference>
<dbReference type="GeneID" id="2541194"/>
<dbReference type="KEGG" id="spo:2541194"/>
<dbReference type="PomBase" id="SPBC725.13c">
    <property type="gene designation" value="psf2"/>
</dbReference>
<dbReference type="VEuPathDB" id="FungiDB:SPBC725.13c"/>
<dbReference type="eggNOG" id="KOG4071">
    <property type="taxonomic scope" value="Eukaryota"/>
</dbReference>
<dbReference type="HOGENOM" id="CLU_078274_1_0_1"/>
<dbReference type="InParanoid" id="O94329"/>
<dbReference type="OMA" id="GPYYMEL"/>
<dbReference type="PhylomeDB" id="O94329"/>
<dbReference type="Reactome" id="R-SPO-176974">
    <property type="pathway name" value="Unwinding of DNA"/>
</dbReference>
<dbReference type="PRO" id="PR:O94329"/>
<dbReference type="Proteomes" id="UP000002485">
    <property type="component" value="Chromosome II"/>
</dbReference>
<dbReference type="GO" id="GO:0000785">
    <property type="term" value="C:chromatin"/>
    <property type="evidence" value="ECO:0000314"/>
    <property type="project" value="PomBase"/>
</dbReference>
<dbReference type="GO" id="GO:0005829">
    <property type="term" value="C:cytosol"/>
    <property type="evidence" value="ECO:0007005"/>
    <property type="project" value="PomBase"/>
</dbReference>
<dbReference type="GO" id="GO:0000811">
    <property type="term" value="C:GINS complex"/>
    <property type="evidence" value="ECO:0000318"/>
    <property type="project" value="GO_Central"/>
</dbReference>
<dbReference type="GO" id="GO:0043596">
    <property type="term" value="C:nuclear replication fork"/>
    <property type="evidence" value="ECO:0000305"/>
    <property type="project" value="PomBase"/>
</dbReference>
<dbReference type="GO" id="GO:0005634">
    <property type="term" value="C:nucleus"/>
    <property type="evidence" value="ECO:0000314"/>
    <property type="project" value="PomBase"/>
</dbReference>
<dbReference type="GO" id="GO:0007059">
    <property type="term" value="P:chromosome segregation"/>
    <property type="evidence" value="ECO:0007669"/>
    <property type="project" value="UniProtKB-KW"/>
</dbReference>
<dbReference type="GO" id="GO:0006270">
    <property type="term" value="P:DNA replication initiation"/>
    <property type="evidence" value="ECO:0000304"/>
    <property type="project" value="PomBase"/>
</dbReference>
<dbReference type="GO" id="GO:0000727">
    <property type="term" value="P:double-strand break repair via break-induced replication"/>
    <property type="evidence" value="ECO:0000318"/>
    <property type="project" value="GO_Central"/>
</dbReference>
<dbReference type="GO" id="GO:0033260">
    <property type="term" value="P:nuclear DNA replication"/>
    <property type="evidence" value="ECO:0000315"/>
    <property type="project" value="PomBase"/>
</dbReference>
<dbReference type="CDD" id="cd11712">
    <property type="entry name" value="GINS_A_psf2"/>
    <property type="match status" value="1"/>
</dbReference>
<dbReference type="CDD" id="cd21694">
    <property type="entry name" value="GINS_B_Psf2"/>
    <property type="match status" value="1"/>
</dbReference>
<dbReference type="FunFam" id="1.20.58.1020:FF:000001">
    <property type="entry name" value="DNA replication complex GINS protein PSF2"/>
    <property type="match status" value="1"/>
</dbReference>
<dbReference type="FunFam" id="3.40.5.50:FF:000001">
    <property type="entry name" value="DNA replication complex GINS protein PSF2"/>
    <property type="match status" value="1"/>
</dbReference>
<dbReference type="Gene3D" id="1.20.58.1020">
    <property type="match status" value="1"/>
</dbReference>
<dbReference type="Gene3D" id="3.40.5.50">
    <property type="match status" value="1"/>
</dbReference>
<dbReference type="InterPro" id="IPR021151">
    <property type="entry name" value="GINS_A"/>
</dbReference>
<dbReference type="InterPro" id="IPR036224">
    <property type="entry name" value="GINS_bundle-like_dom_sf"/>
</dbReference>
<dbReference type="InterPro" id="IPR007257">
    <property type="entry name" value="GINS_Psf2"/>
</dbReference>
<dbReference type="InterPro" id="IPR056784">
    <property type="entry name" value="PSF2_N"/>
</dbReference>
<dbReference type="PANTHER" id="PTHR12772">
    <property type="entry name" value="DNA REPLICATION COMPLEX GINS PROTEIN PSF2"/>
    <property type="match status" value="1"/>
</dbReference>
<dbReference type="PANTHER" id="PTHR12772:SF0">
    <property type="entry name" value="DNA REPLICATION COMPLEX GINS PROTEIN PSF2"/>
    <property type="match status" value="1"/>
</dbReference>
<dbReference type="Pfam" id="PF25005">
    <property type="entry name" value="PSF2_N"/>
    <property type="match status" value="1"/>
</dbReference>
<dbReference type="Pfam" id="PF05916">
    <property type="entry name" value="Sld5"/>
    <property type="match status" value="1"/>
</dbReference>
<dbReference type="PIRSF" id="PIRSF028998">
    <property type="entry name" value="GINS_Psf2_subgr"/>
    <property type="match status" value="1"/>
</dbReference>
<dbReference type="SUPFAM" id="SSF158573">
    <property type="entry name" value="GINS helical bundle-like"/>
    <property type="match status" value="1"/>
</dbReference>
<dbReference type="SUPFAM" id="SSF160059">
    <property type="entry name" value="PriA/YqbF domain"/>
    <property type="match status" value="1"/>
</dbReference>
<accession>O94329</accession>
<gene>
    <name type="primary">psf2</name>
    <name type="synonym">bsh3</name>
    <name type="synonym">dre13</name>
    <name type="ORF">SPBC725.13c</name>
</gene>
<keyword id="KW-0159">Chromosome partition</keyword>
<keyword id="KW-0235">DNA replication</keyword>
<keyword id="KW-0539">Nucleus</keyword>
<keyword id="KW-1185">Reference proteome</keyword>
<proteinExistence type="evidence at protein level"/>
<sequence>MALPRELEISFSPEEMEFLAGNEYINIVPSETMDQLPLVSATIPIMKPPKKCRVPLWLALELKKQNLARIVPPEWMEIGKLENIRDDELENETFSELPFRWLETAHLLLNFCADDIEDVEDIRRILLDIREARQSKARTGLEAINEVQLTLDNLGAMEINEIRPIFREVMDRMRKIVQVSQEE</sequence>
<protein>
    <recommendedName>
        <fullName>DNA replication complex GINS protein psf2</fullName>
    </recommendedName>
</protein>
<evidence type="ECO:0000269" key="1">
    <source>
    </source>
</evidence>
<evidence type="ECO:0000269" key="2">
    <source>
    </source>
</evidence>
<evidence type="ECO:0000305" key="3"/>
<name>PSF2_SCHPO</name>
<feature type="chain" id="PRO_0000194821" description="DNA replication complex GINS protein psf2">
    <location>
        <begin position="1"/>
        <end position="183"/>
    </location>
</feature>
<feature type="mutagenesis site" description="In psf2-209; temperature-sensitive." evidence="1">
    <original>R</original>
    <variation>K</variation>
    <location>
        <position position="133"/>
    </location>
</feature>
<organism>
    <name type="scientific">Schizosaccharomyces pombe (strain 972 / ATCC 24843)</name>
    <name type="common">Fission yeast</name>
    <dbReference type="NCBI Taxonomy" id="284812"/>
    <lineage>
        <taxon>Eukaryota</taxon>
        <taxon>Fungi</taxon>
        <taxon>Dikarya</taxon>
        <taxon>Ascomycota</taxon>
        <taxon>Taphrinomycotina</taxon>
        <taxon>Schizosaccharomycetes</taxon>
        <taxon>Schizosaccharomycetales</taxon>
        <taxon>Schizosaccharomycetaceae</taxon>
        <taxon>Schizosaccharomyces</taxon>
    </lineage>
</organism>
<reference key="1">
    <citation type="journal article" date="2002" name="Nature">
        <title>The genome sequence of Schizosaccharomyces pombe.</title>
        <authorList>
            <person name="Wood V."/>
            <person name="Gwilliam R."/>
            <person name="Rajandream M.A."/>
            <person name="Lyne M.H."/>
            <person name="Lyne R."/>
            <person name="Stewart A."/>
            <person name="Sgouros J.G."/>
            <person name="Peat N."/>
            <person name="Hayles J."/>
            <person name="Baker S.G."/>
            <person name="Basham D."/>
            <person name="Bowman S."/>
            <person name="Brooks K."/>
            <person name="Brown D."/>
            <person name="Brown S."/>
            <person name="Chillingworth T."/>
            <person name="Churcher C.M."/>
            <person name="Collins M."/>
            <person name="Connor R."/>
            <person name="Cronin A."/>
            <person name="Davis P."/>
            <person name="Feltwell T."/>
            <person name="Fraser A."/>
            <person name="Gentles S."/>
            <person name="Goble A."/>
            <person name="Hamlin N."/>
            <person name="Harris D.E."/>
            <person name="Hidalgo J."/>
            <person name="Hodgson G."/>
            <person name="Holroyd S."/>
            <person name="Hornsby T."/>
            <person name="Howarth S."/>
            <person name="Huckle E.J."/>
            <person name="Hunt S."/>
            <person name="Jagels K."/>
            <person name="James K.D."/>
            <person name="Jones L."/>
            <person name="Jones M."/>
            <person name="Leather S."/>
            <person name="McDonald S."/>
            <person name="McLean J."/>
            <person name="Mooney P."/>
            <person name="Moule S."/>
            <person name="Mungall K.L."/>
            <person name="Murphy L.D."/>
            <person name="Niblett D."/>
            <person name="Odell C."/>
            <person name="Oliver K."/>
            <person name="O'Neil S."/>
            <person name="Pearson D."/>
            <person name="Quail M.A."/>
            <person name="Rabbinowitsch E."/>
            <person name="Rutherford K.M."/>
            <person name="Rutter S."/>
            <person name="Saunders D."/>
            <person name="Seeger K."/>
            <person name="Sharp S."/>
            <person name="Skelton J."/>
            <person name="Simmonds M.N."/>
            <person name="Squares R."/>
            <person name="Squares S."/>
            <person name="Stevens K."/>
            <person name="Taylor K."/>
            <person name="Taylor R.G."/>
            <person name="Tivey A."/>
            <person name="Walsh S.V."/>
            <person name="Warren T."/>
            <person name="Whitehead S."/>
            <person name="Woodward J.R."/>
            <person name="Volckaert G."/>
            <person name="Aert R."/>
            <person name="Robben J."/>
            <person name="Grymonprez B."/>
            <person name="Weltjens I."/>
            <person name="Vanstreels E."/>
            <person name="Rieger M."/>
            <person name="Schaefer M."/>
            <person name="Mueller-Auer S."/>
            <person name="Gabel C."/>
            <person name="Fuchs M."/>
            <person name="Duesterhoeft A."/>
            <person name="Fritzc C."/>
            <person name="Holzer E."/>
            <person name="Moestl D."/>
            <person name="Hilbert H."/>
            <person name="Borzym K."/>
            <person name="Langer I."/>
            <person name="Beck A."/>
            <person name="Lehrach H."/>
            <person name="Reinhardt R."/>
            <person name="Pohl T.M."/>
            <person name="Eger P."/>
            <person name="Zimmermann W."/>
            <person name="Wedler H."/>
            <person name="Wambutt R."/>
            <person name="Purnelle B."/>
            <person name="Goffeau A."/>
            <person name="Cadieu E."/>
            <person name="Dreano S."/>
            <person name="Gloux S."/>
            <person name="Lelaure V."/>
            <person name="Mottier S."/>
            <person name="Galibert F."/>
            <person name="Aves S.J."/>
            <person name="Xiang Z."/>
            <person name="Hunt C."/>
            <person name="Moore K."/>
            <person name="Hurst S.M."/>
            <person name="Lucas M."/>
            <person name="Rochet M."/>
            <person name="Gaillardin C."/>
            <person name="Tallada V.A."/>
            <person name="Garzon A."/>
            <person name="Thode G."/>
            <person name="Daga R.R."/>
            <person name="Cruzado L."/>
            <person name="Jimenez J."/>
            <person name="Sanchez M."/>
            <person name="del Rey F."/>
            <person name="Benito J."/>
            <person name="Dominguez A."/>
            <person name="Revuelta J.L."/>
            <person name="Moreno S."/>
            <person name="Armstrong J."/>
            <person name="Forsburg S.L."/>
            <person name="Cerutti L."/>
            <person name="Lowe T."/>
            <person name="McCombie W.R."/>
            <person name="Paulsen I."/>
            <person name="Potashkin J."/>
            <person name="Shpakovski G.V."/>
            <person name="Ussery D."/>
            <person name="Barrell B.G."/>
            <person name="Nurse P."/>
        </authorList>
    </citation>
    <scope>NUCLEOTIDE SEQUENCE [LARGE SCALE GENOMIC DNA]</scope>
    <source>
        <strain>972 / ATCC 24843</strain>
    </source>
</reference>
<reference key="2">
    <citation type="journal article" date="2005" name="Mol. Cell. Biol.">
        <title>Suppressors of Bir1p (Survivin) identify roles for the chromosomal passenger protein Pic1p (INCENP) and the replication initiation factor Psf2p in chromosome segregation.</title>
        <authorList>
            <person name="Huang H.-K."/>
            <person name="Bailis J.M."/>
            <person name="Leverson J.D."/>
            <person name="Gomez E.B."/>
            <person name="Forsburg S.L."/>
            <person name="Hunter T."/>
        </authorList>
    </citation>
    <scope>FUNCTION</scope>
    <scope>INTERACTION WITH SLD5</scope>
    <scope>SUBCELLULAR LOCATION</scope>
    <scope>MUTAGENESIS OF ARG-133</scope>
</reference>
<reference key="3">
    <citation type="journal article" date="2006" name="Nat. Biotechnol.">
        <title>ORFeome cloning and global analysis of protein localization in the fission yeast Schizosaccharomyces pombe.</title>
        <authorList>
            <person name="Matsuyama A."/>
            <person name="Arai R."/>
            <person name="Yashiroda Y."/>
            <person name="Shirai A."/>
            <person name="Kamata A."/>
            <person name="Sekido S."/>
            <person name="Kobayashi Y."/>
            <person name="Hashimoto A."/>
            <person name="Hamamoto M."/>
            <person name="Hiraoka Y."/>
            <person name="Horinouchi S."/>
            <person name="Yoshida M."/>
        </authorList>
    </citation>
    <scope>SUBCELLULAR LOCATION [LARGE SCALE ANALYSIS]</scope>
</reference>